<comment type="function">
    <text evidence="1">Catalyzes the condensation of (S)-aspartate-beta-semialdehyde [(S)-ASA] and pyruvate to 4-hydroxy-tetrahydrodipicolinate (HTPA).</text>
</comment>
<comment type="catalytic activity">
    <reaction evidence="1">
        <text>L-aspartate 4-semialdehyde + pyruvate = (2S,4S)-4-hydroxy-2,3,4,5-tetrahydrodipicolinate + H2O + H(+)</text>
        <dbReference type="Rhea" id="RHEA:34171"/>
        <dbReference type="ChEBI" id="CHEBI:15361"/>
        <dbReference type="ChEBI" id="CHEBI:15377"/>
        <dbReference type="ChEBI" id="CHEBI:15378"/>
        <dbReference type="ChEBI" id="CHEBI:67139"/>
        <dbReference type="ChEBI" id="CHEBI:537519"/>
        <dbReference type="EC" id="4.3.3.7"/>
    </reaction>
</comment>
<comment type="pathway">
    <text evidence="1">Amino-acid biosynthesis; L-lysine biosynthesis via DAP pathway; (S)-tetrahydrodipicolinate from L-aspartate: step 3/4.</text>
</comment>
<comment type="subunit">
    <text evidence="1">Homotetramer; dimer of dimers.</text>
</comment>
<comment type="subcellular location">
    <subcellularLocation>
        <location evidence="1">Cytoplasm</location>
    </subcellularLocation>
</comment>
<comment type="similarity">
    <text evidence="1">Belongs to the DapA family.</text>
</comment>
<comment type="caution">
    <text evidence="2">Was originally thought to be a dihydrodipicolinate synthase (DHDPS), catalyzing the condensation of (S)-aspartate-beta-semialdehyde [(S)-ASA] and pyruvate to dihydrodipicolinate (DHDP). However, it was shown in E.coli that the product of the enzymatic reaction is not dihydrodipicolinate but in fact (4S)-4-hydroxy-2,3,4,5-tetrahydro-(2S)-dipicolinic acid (HTPA), and that the consecutive dehydration reaction leading to DHDP is not spontaneous but catalyzed by DapB.</text>
</comment>
<accession>Q2S3M1</accession>
<proteinExistence type="inferred from homology"/>
<feature type="chain" id="PRO_0000340986" description="4-hydroxy-tetrahydrodipicolinate synthase">
    <location>
        <begin position="1"/>
        <end position="302"/>
    </location>
</feature>
<feature type="active site" description="Proton donor/acceptor" evidence="1">
    <location>
        <position position="138"/>
    </location>
</feature>
<feature type="active site" description="Schiff-base intermediate with substrate" evidence="1">
    <location>
        <position position="167"/>
    </location>
</feature>
<feature type="binding site" evidence="1">
    <location>
        <position position="50"/>
    </location>
    <ligand>
        <name>pyruvate</name>
        <dbReference type="ChEBI" id="CHEBI:15361"/>
    </ligand>
</feature>
<feature type="binding site" evidence="1">
    <location>
        <position position="209"/>
    </location>
    <ligand>
        <name>pyruvate</name>
        <dbReference type="ChEBI" id="CHEBI:15361"/>
    </ligand>
</feature>
<feature type="site" description="Part of a proton relay during catalysis" evidence="1">
    <location>
        <position position="49"/>
    </location>
</feature>
<feature type="site" description="Part of a proton relay during catalysis" evidence="1">
    <location>
        <position position="112"/>
    </location>
</feature>
<dbReference type="EC" id="4.3.3.7" evidence="1"/>
<dbReference type="EMBL" id="CP000159">
    <property type="protein sequence ID" value="ABC45789.1"/>
    <property type="molecule type" value="Genomic_DNA"/>
</dbReference>
<dbReference type="RefSeq" id="WP_011403838.1">
    <property type="nucleotide sequence ID" value="NC_007677.1"/>
</dbReference>
<dbReference type="RefSeq" id="YP_445210.1">
    <property type="nucleotide sequence ID" value="NC_007677.1"/>
</dbReference>
<dbReference type="SMR" id="Q2S3M1"/>
<dbReference type="STRING" id="309807.SRU_1080"/>
<dbReference type="EnsemblBacteria" id="ABC45789">
    <property type="protein sequence ID" value="ABC45789"/>
    <property type="gene ID" value="SRU_1080"/>
</dbReference>
<dbReference type="GeneID" id="83728009"/>
<dbReference type="KEGG" id="sru:SRU_1080"/>
<dbReference type="PATRIC" id="fig|309807.25.peg.1117"/>
<dbReference type="eggNOG" id="COG0329">
    <property type="taxonomic scope" value="Bacteria"/>
</dbReference>
<dbReference type="HOGENOM" id="CLU_049343_7_1_10"/>
<dbReference type="OrthoDB" id="9782828at2"/>
<dbReference type="UniPathway" id="UPA00034">
    <property type="reaction ID" value="UER00017"/>
</dbReference>
<dbReference type="Proteomes" id="UP000008674">
    <property type="component" value="Chromosome"/>
</dbReference>
<dbReference type="GO" id="GO:0005829">
    <property type="term" value="C:cytosol"/>
    <property type="evidence" value="ECO:0007669"/>
    <property type="project" value="TreeGrafter"/>
</dbReference>
<dbReference type="GO" id="GO:0008840">
    <property type="term" value="F:4-hydroxy-tetrahydrodipicolinate synthase activity"/>
    <property type="evidence" value="ECO:0007669"/>
    <property type="project" value="UniProtKB-UniRule"/>
</dbReference>
<dbReference type="GO" id="GO:0019877">
    <property type="term" value="P:diaminopimelate biosynthetic process"/>
    <property type="evidence" value="ECO:0007669"/>
    <property type="project" value="UniProtKB-UniRule"/>
</dbReference>
<dbReference type="GO" id="GO:0009089">
    <property type="term" value="P:lysine biosynthetic process via diaminopimelate"/>
    <property type="evidence" value="ECO:0007669"/>
    <property type="project" value="UniProtKB-UniRule"/>
</dbReference>
<dbReference type="CDD" id="cd00950">
    <property type="entry name" value="DHDPS"/>
    <property type="match status" value="1"/>
</dbReference>
<dbReference type="Gene3D" id="3.20.20.70">
    <property type="entry name" value="Aldolase class I"/>
    <property type="match status" value="1"/>
</dbReference>
<dbReference type="HAMAP" id="MF_00418">
    <property type="entry name" value="DapA"/>
    <property type="match status" value="1"/>
</dbReference>
<dbReference type="InterPro" id="IPR013785">
    <property type="entry name" value="Aldolase_TIM"/>
</dbReference>
<dbReference type="InterPro" id="IPR005263">
    <property type="entry name" value="DapA"/>
</dbReference>
<dbReference type="InterPro" id="IPR002220">
    <property type="entry name" value="DapA-like"/>
</dbReference>
<dbReference type="InterPro" id="IPR020625">
    <property type="entry name" value="Schiff_base-form_aldolases_AS"/>
</dbReference>
<dbReference type="InterPro" id="IPR020624">
    <property type="entry name" value="Schiff_base-form_aldolases_CS"/>
</dbReference>
<dbReference type="NCBIfam" id="TIGR00674">
    <property type="entry name" value="dapA"/>
    <property type="match status" value="1"/>
</dbReference>
<dbReference type="PANTHER" id="PTHR12128:SF66">
    <property type="entry name" value="4-HYDROXY-2-OXOGLUTARATE ALDOLASE, MITOCHONDRIAL"/>
    <property type="match status" value="1"/>
</dbReference>
<dbReference type="PANTHER" id="PTHR12128">
    <property type="entry name" value="DIHYDRODIPICOLINATE SYNTHASE"/>
    <property type="match status" value="1"/>
</dbReference>
<dbReference type="Pfam" id="PF00701">
    <property type="entry name" value="DHDPS"/>
    <property type="match status" value="1"/>
</dbReference>
<dbReference type="PIRSF" id="PIRSF001365">
    <property type="entry name" value="DHDPS"/>
    <property type="match status" value="1"/>
</dbReference>
<dbReference type="PRINTS" id="PR00146">
    <property type="entry name" value="DHPICSNTHASE"/>
</dbReference>
<dbReference type="SMART" id="SM01130">
    <property type="entry name" value="DHDPS"/>
    <property type="match status" value="1"/>
</dbReference>
<dbReference type="SUPFAM" id="SSF51569">
    <property type="entry name" value="Aldolase"/>
    <property type="match status" value="1"/>
</dbReference>
<dbReference type="PROSITE" id="PS00665">
    <property type="entry name" value="DHDPS_1"/>
    <property type="match status" value="1"/>
</dbReference>
<dbReference type="PROSITE" id="PS00666">
    <property type="entry name" value="DHDPS_2"/>
    <property type="match status" value="1"/>
</dbReference>
<evidence type="ECO:0000255" key="1">
    <source>
        <dbReference type="HAMAP-Rule" id="MF_00418"/>
    </source>
</evidence>
<evidence type="ECO:0000305" key="2"/>
<gene>
    <name evidence="1" type="primary">dapA</name>
    <name type="ordered locus">SRU_1080</name>
</gene>
<sequence>MAHDMLFRGVAPALVTPFTSDDDIDEAAFRRLIDAQIEGGVSALVVLGTTGENPTITEDERRRIVDAALDAADGRVPVIVGTGTNNTDESVAFSKAAVDAGADGLLVVGPYYNKPSQAGFAAHVETIAAAAEAPIILYNVPGRTSFNIAPETALHLAEEVPHVAGIKEASGDIEQIDDLLAHRPDGFGVYSGDDEMTLPLLAMGGDGAVSVISNALPGPFCELVAAGLDDDLATARDRHAELLPAMRACFLETNPVPIKDVCAALGWMEPHVRLPLTPMDERSPVRQRVLSAFDDLIDVTVA</sequence>
<protein>
    <recommendedName>
        <fullName evidence="1">4-hydroxy-tetrahydrodipicolinate synthase</fullName>
        <shortName evidence="1">HTPA synthase</shortName>
        <ecNumber evidence="1">4.3.3.7</ecNumber>
    </recommendedName>
</protein>
<organism>
    <name type="scientific">Salinibacter ruber (strain DSM 13855 / M31)</name>
    <dbReference type="NCBI Taxonomy" id="309807"/>
    <lineage>
        <taxon>Bacteria</taxon>
        <taxon>Pseudomonadati</taxon>
        <taxon>Rhodothermota</taxon>
        <taxon>Rhodothermia</taxon>
        <taxon>Rhodothermales</taxon>
        <taxon>Salinibacteraceae</taxon>
        <taxon>Salinibacter</taxon>
    </lineage>
</organism>
<reference key="1">
    <citation type="journal article" date="2005" name="Proc. Natl. Acad. Sci. U.S.A.">
        <title>The genome of Salinibacter ruber: convergence and gene exchange among hyperhalophilic bacteria and archaea.</title>
        <authorList>
            <person name="Mongodin E.F."/>
            <person name="Nelson K.E."/>
            <person name="Daugherty S."/>
            <person name="DeBoy R.T."/>
            <person name="Wister J."/>
            <person name="Khouri H."/>
            <person name="Weidman J."/>
            <person name="Walsh D.A."/>
            <person name="Papke R.T."/>
            <person name="Sanchez Perez G."/>
            <person name="Sharma A.K."/>
            <person name="Nesbo C.L."/>
            <person name="MacLeod D."/>
            <person name="Bapteste E."/>
            <person name="Doolittle W.F."/>
            <person name="Charlebois R.L."/>
            <person name="Legault B."/>
            <person name="Rodriguez-Valera F."/>
        </authorList>
    </citation>
    <scope>NUCLEOTIDE SEQUENCE [LARGE SCALE GENOMIC DNA]</scope>
    <source>
        <strain>DSM 13855 / CECT 5946 / M31</strain>
    </source>
</reference>
<keyword id="KW-0028">Amino-acid biosynthesis</keyword>
<keyword id="KW-0963">Cytoplasm</keyword>
<keyword id="KW-0220">Diaminopimelate biosynthesis</keyword>
<keyword id="KW-0456">Lyase</keyword>
<keyword id="KW-0457">Lysine biosynthesis</keyword>
<keyword id="KW-1185">Reference proteome</keyword>
<keyword id="KW-0704">Schiff base</keyword>
<name>DAPA_SALRD</name>